<proteinExistence type="evidence at protein level"/>
<sequence>MGGLRPWSRYGLLVVAHLLALGLGAVVFQALEGPPACRLQAELRAELAAFQAEHRACLPPGALEELLGTALATQAHGVSTLGNSSEGRTWDLPSALLFAASILTTTGYGHMAPLSPGGKAFCMVYAALGLPASLALVATLRHCLLPVLSRPRAWVAVHWQLSPARAALLQAVALGLLVASSFVLLPALVLWGLQGDCSLLGAVYFCFSSLSTIGLEDLLPGRGRSLHPVIYHLGQLALLGYLLLGLLAMLLAVETFSELPQVRAMGKFFRPSGPVTAEDQGGILGQDELALSTLPPAAPASGQAPAC</sequence>
<evidence type="ECO:0000255" key="1"/>
<evidence type="ECO:0000303" key="2">
    <source>
    </source>
</evidence>
<evidence type="ECO:0000303" key="3">
    <source>
    </source>
</evidence>
<evidence type="ECO:0000305" key="4"/>
<name>KCNK7_HUMAN</name>
<feature type="chain" id="PRO_0000101751" description="Potassium channel subfamily K member 7">
    <location>
        <begin position="1"/>
        <end position="307"/>
    </location>
</feature>
<feature type="topological domain" description="Cytoplasmic" evidence="1">
    <location>
        <begin position="1"/>
        <end position="10"/>
    </location>
</feature>
<feature type="transmembrane region" description="Helical" evidence="1">
    <location>
        <begin position="11"/>
        <end position="31"/>
    </location>
</feature>
<feature type="intramembrane region" description="Pore-forming; Name=Pore-forming 1" evidence="1">
    <location>
        <begin position="92"/>
        <end position="119"/>
    </location>
</feature>
<feature type="transmembrane region" description="Helical" evidence="1">
    <location>
        <begin position="120"/>
        <end position="140"/>
    </location>
</feature>
<feature type="topological domain" description="Cytoplasmic" evidence="1">
    <location>
        <begin position="141"/>
        <end position="170"/>
    </location>
</feature>
<feature type="transmembrane region" description="Helical" evidence="1">
    <location>
        <begin position="171"/>
        <end position="191"/>
    </location>
</feature>
<feature type="intramembrane region" description="Pore-forming; Name=Pore-forming 2" evidence="1">
    <location>
        <begin position="199"/>
        <end position="227"/>
    </location>
</feature>
<feature type="transmembrane region" description="Helical" evidence="1">
    <location>
        <begin position="233"/>
        <end position="253"/>
    </location>
</feature>
<feature type="topological domain" description="Cytoplasmic" evidence="1">
    <location>
        <begin position="254"/>
        <end position="307"/>
    </location>
</feature>
<feature type="glycosylation site" description="N-linked (GlcNAc...) asparagine" evidence="1">
    <location>
        <position position="83"/>
    </location>
</feature>
<feature type="splice variant" id="VSP_006695" description="In isoform C." evidence="2">
    <original>YLLLGLLAMLLAVETFS</original>
    <variation>KSSHLTACGGRGKRSLD</variation>
    <location>
        <begin position="241"/>
        <end position="257"/>
    </location>
</feature>
<feature type="splice variant" id="VSP_006693" description="In isoform B." evidence="2 3">
    <original>YLLLGLLAMLLA</original>
    <variation>GGTSLQGTAWEG</variation>
    <location>
        <begin position="241"/>
        <end position="252"/>
    </location>
</feature>
<feature type="splice variant" id="VSP_006694" description="In isoform B." evidence="2 3">
    <location>
        <begin position="253"/>
        <end position="307"/>
    </location>
</feature>
<feature type="splice variant" id="VSP_006696" description="In isoform C." evidence="2">
    <location>
        <begin position="258"/>
        <end position="307"/>
    </location>
</feature>
<protein>
    <recommendedName>
        <fullName>Potassium channel subfamily K member 7</fullName>
    </recommendedName>
</protein>
<reference key="1">
    <citation type="journal article" date="1999" name="J. Biol. Chem.">
        <title>Cloning of a new mouse two-P domain channel subunit and a human homologue with a unique pore structure.</title>
        <authorList>
            <person name="Salinas M."/>
            <person name="Reyes R."/>
            <person name="Lesage F."/>
            <person name="Fosset M."/>
            <person name="Heurteaux C."/>
            <person name="Romey G."/>
            <person name="Lazdunski M."/>
        </authorList>
    </citation>
    <scope>NUCLEOTIDE SEQUENCE [MRNA] (ISOFORMS A; B AND C)</scope>
    <source>
        <tissue>Brain</tissue>
    </source>
</reference>
<reference key="2">
    <citation type="submission" date="2005-07" db="EMBL/GenBank/DDBJ databases">
        <authorList>
            <person name="Mural R.J."/>
            <person name="Istrail S."/>
            <person name="Sutton G.G."/>
            <person name="Florea L."/>
            <person name="Halpern A.L."/>
            <person name="Mobarry C.M."/>
            <person name="Lippert R."/>
            <person name="Walenz B."/>
            <person name="Shatkay H."/>
            <person name="Dew I."/>
            <person name="Miller J.R."/>
            <person name="Flanigan M.J."/>
            <person name="Edwards N.J."/>
            <person name="Bolanos R."/>
            <person name="Fasulo D."/>
            <person name="Halldorsson B.V."/>
            <person name="Hannenhalli S."/>
            <person name="Turner R."/>
            <person name="Yooseph S."/>
            <person name="Lu F."/>
            <person name="Nusskern D.R."/>
            <person name="Shue B.C."/>
            <person name="Zheng X.H."/>
            <person name="Zhong F."/>
            <person name="Delcher A.L."/>
            <person name="Huson D.H."/>
            <person name="Kravitz S.A."/>
            <person name="Mouchard L."/>
            <person name="Reinert K."/>
            <person name="Remington K.A."/>
            <person name="Clark A.G."/>
            <person name="Waterman M.S."/>
            <person name="Eichler E.E."/>
            <person name="Adams M.D."/>
            <person name="Hunkapiller M.W."/>
            <person name="Myers E.W."/>
            <person name="Venter J.C."/>
        </authorList>
    </citation>
    <scope>NUCLEOTIDE SEQUENCE [LARGE SCALE GENOMIC DNA]</scope>
</reference>
<reference key="3">
    <citation type="journal article" date="2004" name="Genome Res.">
        <title>The status, quality, and expansion of the NIH full-length cDNA project: the Mammalian Gene Collection (MGC).</title>
        <authorList>
            <consortium name="The MGC Project Team"/>
        </authorList>
    </citation>
    <scope>NUCLEOTIDE SEQUENCE [LARGE SCALE MRNA] (ISOFORM B)</scope>
</reference>
<comment type="function">
    <text>Probable potassium channel subunit. No channel activity observed in vitro as protein remains in the endoplasmic reticulum. May need to associate with an as yet unknown partner in order to reach the plasma membrane.</text>
</comment>
<comment type="subunit">
    <text evidence="4">Homodimer.</text>
</comment>
<comment type="interaction">
    <interactant intactId="EBI-23647813">
        <id>Q9Y2U2-2</id>
    </interactant>
    <interactant intactId="EBI-11579371">
        <id>Q9BXR6</id>
        <label>CFHR5</label>
    </interactant>
    <organismsDiffer>false</organismsDiffer>
    <experiments>3</experiments>
</comment>
<comment type="subcellular location">
    <subcellularLocation>
        <location evidence="4">Membrane</location>
        <topology evidence="4">Multi-pass membrane protein</topology>
    </subcellularLocation>
</comment>
<comment type="alternative products">
    <event type="alternative splicing"/>
    <isoform>
        <id>Q9Y2U2-1</id>
        <name>A</name>
        <sequence type="displayed"/>
    </isoform>
    <isoform>
        <id>Q9Y2U2-2</id>
        <name>B</name>
        <sequence type="described" ref="VSP_006693 VSP_006694"/>
    </isoform>
    <isoform>
        <id>Q9Y2U2-3</id>
        <name>C</name>
        <sequence type="described" ref="VSP_006695 VSP_006696"/>
    </isoform>
</comment>
<comment type="similarity">
    <text evidence="4">Belongs to the two pore domain potassium channel (TC 1.A.1.8) family.</text>
</comment>
<gene>
    <name type="primary">KCNK7</name>
</gene>
<accession>Q9Y2U2</accession>
<accession>Q3SYI2</accession>
<accession>Q9Y2U3</accession>
<accession>Q9Y2U4</accession>
<dbReference type="EMBL" id="AF110522">
    <property type="protein sequence ID" value="AAD29578.1"/>
    <property type="molecule type" value="mRNA"/>
</dbReference>
<dbReference type="EMBL" id="AF110524">
    <property type="protein sequence ID" value="AAD29580.1"/>
    <property type="molecule type" value="mRNA"/>
</dbReference>
<dbReference type="EMBL" id="AF110523">
    <property type="protein sequence ID" value="AAD29579.1"/>
    <property type="molecule type" value="mRNA"/>
</dbReference>
<dbReference type="EMBL" id="CH471076">
    <property type="protein sequence ID" value="EAW74413.1"/>
    <property type="molecule type" value="Genomic_DNA"/>
</dbReference>
<dbReference type="EMBL" id="BC103809">
    <property type="protein sequence ID" value="AAI03810.1"/>
    <property type="molecule type" value="mRNA"/>
</dbReference>
<dbReference type="CCDS" id="CCDS31608.1">
    <molecule id="Q9Y2U2-1"/>
</dbReference>
<dbReference type="CCDS" id="CCDS41673.1">
    <molecule id="Q9Y2U2-3"/>
</dbReference>
<dbReference type="CCDS" id="CCDS8106.1">
    <molecule id="Q9Y2U2-2"/>
</dbReference>
<dbReference type="RefSeq" id="NP_005705.1">
    <molecule id="Q9Y2U2-3"/>
    <property type="nucleotide sequence ID" value="NM_005714.2"/>
</dbReference>
<dbReference type="RefSeq" id="NP_203133.1">
    <molecule id="Q9Y2U2-1"/>
    <property type="nucleotide sequence ID" value="NM_033347.2"/>
</dbReference>
<dbReference type="RefSeq" id="NP_203134.1">
    <molecule id="Q9Y2U2-2"/>
    <property type="nucleotide sequence ID" value="NM_033348.2"/>
</dbReference>
<dbReference type="RefSeq" id="NP_258416.1">
    <molecule id="Q9Y2U2-2"/>
    <property type="nucleotide sequence ID" value="NM_033455.2"/>
</dbReference>
<dbReference type="SMR" id="Q9Y2U2"/>
<dbReference type="BioGRID" id="115397">
    <property type="interactions" value="9"/>
</dbReference>
<dbReference type="FunCoup" id="Q9Y2U2">
    <property type="interactions" value="143"/>
</dbReference>
<dbReference type="IntAct" id="Q9Y2U2">
    <property type="interactions" value="3"/>
</dbReference>
<dbReference type="STRING" id="9606.ENSP00000344820"/>
<dbReference type="GlyCosmos" id="Q9Y2U2">
    <property type="glycosylation" value="1 site, No reported glycans"/>
</dbReference>
<dbReference type="GlyGen" id="Q9Y2U2">
    <property type="glycosylation" value="1 site"/>
</dbReference>
<dbReference type="iPTMnet" id="Q9Y2U2"/>
<dbReference type="BioMuta" id="KCNK7"/>
<dbReference type="DMDM" id="13124109"/>
<dbReference type="PaxDb" id="9606-ENSP00000344820"/>
<dbReference type="Antibodypedia" id="44255">
    <property type="antibodies" value="38 antibodies from 16 providers"/>
</dbReference>
<dbReference type="DNASU" id="10089"/>
<dbReference type="Ensembl" id="ENST00000340313.5">
    <molecule id="Q9Y2U2-1"/>
    <property type="protein sequence ID" value="ENSP00000344820.5"/>
    <property type="gene ID" value="ENSG00000173338.13"/>
</dbReference>
<dbReference type="Ensembl" id="ENST00000342202.8">
    <molecule id="Q9Y2U2-2"/>
    <property type="protein sequence ID" value="ENSP00000343923.4"/>
    <property type="gene ID" value="ENSG00000173338.13"/>
</dbReference>
<dbReference type="Ensembl" id="ENST00000394216.6">
    <molecule id="Q9Y2U2-3"/>
    <property type="protein sequence ID" value="ENSP00000377764.2"/>
    <property type="gene ID" value="ENSG00000173338.13"/>
</dbReference>
<dbReference type="Ensembl" id="ENST00000394217.6">
    <molecule id="Q9Y2U2-2"/>
    <property type="protein sequence ID" value="ENSP00000377765.2"/>
    <property type="gene ID" value="ENSG00000173338.13"/>
</dbReference>
<dbReference type="GeneID" id="10089"/>
<dbReference type="KEGG" id="hsa:10089"/>
<dbReference type="MANE-Select" id="ENST00000340313.5">
    <property type="protein sequence ID" value="ENSP00000344820.5"/>
    <property type="RefSeq nucleotide sequence ID" value="NM_033347.2"/>
    <property type="RefSeq protein sequence ID" value="NP_203133.1"/>
</dbReference>
<dbReference type="UCSC" id="uc001oeq.3">
    <molecule id="Q9Y2U2-1"/>
    <property type="organism name" value="human"/>
</dbReference>
<dbReference type="AGR" id="HGNC:6282"/>
<dbReference type="CTD" id="10089"/>
<dbReference type="DisGeNET" id="10089"/>
<dbReference type="GeneCards" id="KCNK7"/>
<dbReference type="HGNC" id="HGNC:6282">
    <property type="gene designation" value="KCNK7"/>
</dbReference>
<dbReference type="HPA" id="ENSG00000173338">
    <property type="expression patterns" value="Tissue enriched (skin)"/>
</dbReference>
<dbReference type="MIM" id="603940">
    <property type="type" value="gene"/>
</dbReference>
<dbReference type="neXtProt" id="NX_Q9Y2U2"/>
<dbReference type="OpenTargets" id="ENSG00000173338"/>
<dbReference type="PharmGKB" id="PA30064"/>
<dbReference type="VEuPathDB" id="HostDB:ENSG00000173338"/>
<dbReference type="eggNOG" id="KOG1418">
    <property type="taxonomic scope" value="Eukaryota"/>
</dbReference>
<dbReference type="GeneTree" id="ENSGT00940000161992"/>
<dbReference type="HOGENOM" id="CLU_022504_6_0_1"/>
<dbReference type="InParanoid" id="Q9Y2U2"/>
<dbReference type="OMA" id="LPQVCAM"/>
<dbReference type="OrthoDB" id="297496at2759"/>
<dbReference type="PAN-GO" id="Q9Y2U2">
    <property type="GO annotations" value="5 GO annotations based on evolutionary models"/>
</dbReference>
<dbReference type="PhylomeDB" id="Q9Y2U2"/>
<dbReference type="TreeFam" id="TF313947"/>
<dbReference type="PathwayCommons" id="Q9Y2U2"/>
<dbReference type="Reactome" id="R-HSA-1299308">
    <property type="pathway name" value="Tandem of pore domain in a weak inwardly rectifying K+ channels (TWIK)"/>
</dbReference>
<dbReference type="Reactome" id="R-HSA-5576886">
    <property type="pathway name" value="Phase 4 - resting membrane potential"/>
</dbReference>
<dbReference type="SignaLink" id="Q9Y2U2"/>
<dbReference type="BioGRID-ORCS" id="10089">
    <property type="hits" value="10 hits in 1146 CRISPR screens"/>
</dbReference>
<dbReference type="GeneWiki" id="KCNK7"/>
<dbReference type="GenomeRNAi" id="10089"/>
<dbReference type="Pharos" id="Q9Y2U2">
    <property type="development level" value="Tdark"/>
</dbReference>
<dbReference type="PRO" id="PR:Q9Y2U2"/>
<dbReference type="Proteomes" id="UP000005640">
    <property type="component" value="Chromosome 11"/>
</dbReference>
<dbReference type="RNAct" id="Q9Y2U2">
    <property type="molecule type" value="protein"/>
</dbReference>
<dbReference type="Bgee" id="ENSG00000173338">
    <property type="expression patterns" value="Expressed in skin of abdomen and 98 other cell types or tissues"/>
</dbReference>
<dbReference type="ExpressionAtlas" id="Q9Y2U2">
    <property type="expression patterns" value="baseline and differential"/>
</dbReference>
<dbReference type="GO" id="GO:0034702">
    <property type="term" value="C:monoatomic ion channel complex"/>
    <property type="evidence" value="ECO:0007669"/>
    <property type="project" value="UniProtKB-KW"/>
</dbReference>
<dbReference type="GO" id="GO:0005886">
    <property type="term" value="C:plasma membrane"/>
    <property type="evidence" value="ECO:0000318"/>
    <property type="project" value="GO_Central"/>
</dbReference>
<dbReference type="GO" id="GO:0015271">
    <property type="term" value="F:outward rectifier potassium channel activity"/>
    <property type="evidence" value="ECO:0000318"/>
    <property type="project" value="GO_Central"/>
</dbReference>
<dbReference type="GO" id="GO:0005267">
    <property type="term" value="F:potassium channel activity"/>
    <property type="evidence" value="ECO:0000304"/>
    <property type="project" value="ProtInc"/>
</dbReference>
<dbReference type="GO" id="GO:0022841">
    <property type="term" value="F:potassium ion leak channel activity"/>
    <property type="evidence" value="ECO:0000318"/>
    <property type="project" value="GO_Central"/>
</dbReference>
<dbReference type="GO" id="GO:0071805">
    <property type="term" value="P:potassium ion transmembrane transport"/>
    <property type="evidence" value="ECO:0000318"/>
    <property type="project" value="GO_Central"/>
</dbReference>
<dbReference type="GO" id="GO:0006813">
    <property type="term" value="P:potassium ion transport"/>
    <property type="evidence" value="ECO:0000304"/>
    <property type="project" value="ProtInc"/>
</dbReference>
<dbReference type="FunFam" id="1.10.287.70:FF:000154">
    <property type="entry name" value="Potassium channel subfamily K member 7"/>
    <property type="match status" value="1"/>
</dbReference>
<dbReference type="Gene3D" id="1.10.287.70">
    <property type="match status" value="1"/>
</dbReference>
<dbReference type="InterPro" id="IPR003280">
    <property type="entry name" value="2pore_dom_K_chnl"/>
</dbReference>
<dbReference type="InterPro" id="IPR003092">
    <property type="entry name" value="2pore_dom_K_chnl_TASK"/>
</dbReference>
<dbReference type="InterPro" id="IPR005408">
    <property type="entry name" value="2pore_dom_K_chnl_TWIK"/>
</dbReference>
<dbReference type="InterPro" id="IPR013099">
    <property type="entry name" value="K_chnl_dom"/>
</dbReference>
<dbReference type="PANTHER" id="PTHR11003:SF31">
    <property type="entry name" value="POTASSIUM CHANNEL SUBFAMILY K MEMBER 7"/>
    <property type="match status" value="1"/>
</dbReference>
<dbReference type="PANTHER" id="PTHR11003">
    <property type="entry name" value="POTASSIUM CHANNEL, SUBFAMILY K"/>
    <property type="match status" value="1"/>
</dbReference>
<dbReference type="Pfam" id="PF07885">
    <property type="entry name" value="Ion_trans_2"/>
    <property type="match status" value="2"/>
</dbReference>
<dbReference type="PIRSF" id="PIRSF038061">
    <property type="entry name" value="K_channel_subfamily_K_type"/>
    <property type="match status" value="1"/>
</dbReference>
<dbReference type="PRINTS" id="PR01333">
    <property type="entry name" value="2POREKCHANEL"/>
</dbReference>
<dbReference type="PRINTS" id="PR01586">
    <property type="entry name" value="TWIKCHANNEL"/>
</dbReference>
<dbReference type="SUPFAM" id="SSF81324">
    <property type="entry name" value="Voltage-gated potassium channels"/>
    <property type="match status" value="2"/>
</dbReference>
<keyword id="KW-0025">Alternative splicing</keyword>
<keyword id="KW-0325">Glycoprotein</keyword>
<keyword id="KW-0407">Ion channel</keyword>
<keyword id="KW-0406">Ion transport</keyword>
<keyword id="KW-0472">Membrane</keyword>
<keyword id="KW-0630">Potassium</keyword>
<keyword id="KW-0631">Potassium channel</keyword>
<keyword id="KW-0633">Potassium transport</keyword>
<keyword id="KW-1185">Reference proteome</keyword>
<keyword id="KW-0812">Transmembrane</keyword>
<keyword id="KW-1133">Transmembrane helix</keyword>
<keyword id="KW-0813">Transport</keyword>
<keyword id="KW-0851">Voltage-gated channel</keyword>
<organism>
    <name type="scientific">Homo sapiens</name>
    <name type="common">Human</name>
    <dbReference type="NCBI Taxonomy" id="9606"/>
    <lineage>
        <taxon>Eukaryota</taxon>
        <taxon>Metazoa</taxon>
        <taxon>Chordata</taxon>
        <taxon>Craniata</taxon>
        <taxon>Vertebrata</taxon>
        <taxon>Euteleostomi</taxon>
        <taxon>Mammalia</taxon>
        <taxon>Eutheria</taxon>
        <taxon>Euarchontoglires</taxon>
        <taxon>Primates</taxon>
        <taxon>Haplorrhini</taxon>
        <taxon>Catarrhini</taxon>
        <taxon>Hominidae</taxon>
        <taxon>Homo</taxon>
    </lineage>
</organism>